<comment type="function">
    <text evidence="2">Probable serine/threonine kinase.</text>
</comment>
<comment type="PTM">
    <text evidence="2">Autophosphorylated. Dephosphorylated by PphC.</text>
</comment>
<reference key="1">
    <citation type="journal article" date="1997" name="Science">
        <title>The complete genome sequence of Escherichia coli K-12.</title>
        <authorList>
            <person name="Blattner F.R."/>
            <person name="Plunkett G. III"/>
            <person name="Bloch C.A."/>
            <person name="Perna N.T."/>
            <person name="Burland V."/>
            <person name="Riley M."/>
            <person name="Collado-Vides J."/>
            <person name="Glasner J.D."/>
            <person name="Rode C.K."/>
            <person name="Mayhew G.F."/>
            <person name="Gregor J."/>
            <person name="Davis N.W."/>
            <person name="Kirkpatrick H.A."/>
            <person name="Goeden M.A."/>
            <person name="Rose D.J."/>
            <person name="Mau B."/>
            <person name="Shao Y."/>
        </authorList>
    </citation>
    <scope>NUCLEOTIDE SEQUENCE [LARGE SCALE GENOMIC DNA]</scope>
    <source>
        <strain>K12 / MG1655 / ATCC 47076</strain>
    </source>
</reference>
<reference key="2">
    <citation type="journal article" date="2006" name="Mol. Syst. Biol.">
        <title>Highly accurate genome sequences of Escherichia coli K-12 strains MG1655 and W3110.</title>
        <authorList>
            <person name="Hayashi K."/>
            <person name="Morooka N."/>
            <person name="Yamamoto Y."/>
            <person name="Fujita K."/>
            <person name="Isono K."/>
            <person name="Choi S."/>
            <person name="Ohtsubo E."/>
            <person name="Baba T."/>
            <person name="Wanner B.L."/>
            <person name="Mori H."/>
            <person name="Horiuchi T."/>
        </authorList>
    </citation>
    <scope>NUCLEOTIDE SEQUENCE [LARGE SCALE GENOMIC DNA]</scope>
    <source>
        <strain>K12 / W3110 / ATCC 27325 / DSM 5911</strain>
    </source>
</reference>
<reference key="3">
    <citation type="journal article" date="2018" name="J. Bacteriol.">
        <title>Identification and biochemical characterization of a novel PP2C-like Ser/Thr phosphatase in E. coli.</title>
        <authorList>
            <person name="Rajagopalan K."/>
            <person name="Dworkin J."/>
        </authorList>
    </citation>
    <scope>FUNCTION</scope>
    <scope>PHOSPHORYLATION</scope>
</reference>
<organism>
    <name type="scientific">Escherichia coli (strain K12)</name>
    <dbReference type="NCBI Taxonomy" id="83333"/>
    <lineage>
        <taxon>Bacteria</taxon>
        <taxon>Pseudomonadati</taxon>
        <taxon>Pseudomonadota</taxon>
        <taxon>Gammaproteobacteria</taxon>
        <taxon>Enterobacterales</taxon>
        <taxon>Enterobacteriaceae</taxon>
        <taxon>Escherichia</taxon>
    </lineage>
</organism>
<dbReference type="EC" id="2.7.-.-" evidence="1"/>
<dbReference type="EMBL" id="U00096">
    <property type="protein sequence ID" value="AAC75131.1"/>
    <property type="molecule type" value="Genomic_DNA"/>
</dbReference>
<dbReference type="EMBL" id="AP009048">
    <property type="protein sequence ID" value="BAE76577.1"/>
    <property type="molecule type" value="Genomic_DNA"/>
</dbReference>
<dbReference type="PIR" id="E64973">
    <property type="entry name" value="E64973"/>
</dbReference>
<dbReference type="RefSeq" id="NP_416574.1">
    <property type="nucleotide sequence ID" value="NC_000913.3"/>
</dbReference>
<dbReference type="RefSeq" id="WP_000856081.1">
    <property type="nucleotide sequence ID" value="NZ_LN832404.1"/>
</dbReference>
<dbReference type="SMR" id="P76393"/>
<dbReference type="BioGRID" id="4259694">
    <property type="interactions" value="5"/>
</dbReference>
<dbReference type="FunCoup" id="P76393">
    <property type="interactions" value="79"/>
</dbReference>
<dbReference type="STRING" id="511145.b2070"/>
<dbReference type="PaxDb" id="511145-b2070"/>
<dbReference type="EnsemblBacteria" id="AAC75131">
    <property type="protein sequence ID" value="AAC75131"/>
    <property type="gene ID" value="b2070"/>
</dbReference>
<dbReference type="GeneID" id="947159"/>
<dbReference type="KEGG" id="ecj:JW2055"/>
<dbReference type="KEGG" id="eco:b2070"/>
<dbReference type="KEGG" id="ecoc:C3026_11645"/>
<dbReference type="PATRIC" id="fig|511145.12.peg.2147"/>
<dbReference type="EchoBASE" id="EB3805"/>
<dbReference type="eggNOG" id="COG4248">
    <property type="taxonomic scope" value="Bacteria"/>
</dbReference>
<dbReference type="HOGENOM" id="CLU_022304_0_0_6"/>
<dbReference type="InParanoid" id="P76393"/>
<dbReference type="OMA" id="PGHLADC"/>
<dbReference type="OrthoDB" id="5782056at2"/>
<dbReference type="BioCyc" id="EcoCyc:G7109-MONOMER"/>
<dbReference type="PRO" id="PR:P76393"/>
<dbReference type="Proteomes" id="UP000000625">
    <property type="component" value="Chromosome"/>
</dbReference>
<dbReference type="GO" id="GO:0005524">
    <property type="term" value="F:ATP binding"/>
    <property type="evidence" value="ECO:0007669"/>
    <property type="project" value="UniProtKB-KW"/>
</dbReference>
<dbReference type="GO" id="GO:0004672">
    <property type="term" value="F:protein kinase activity"/>
    <property type="evidence" value="ECO:0007669"/>
    <property type="project" value="InterPro"/>
</dbReference>
<dbReference type="Gene3D" id="1.10.510.10">
    <property type="entry name" value="Transferase(Phosphotransferase) domain 1"/>
    <property type="match status" value="1"/>
</dbReference>
<dbReference type="InterPro" id="IPR011009">
    <property type="entry name" value="Kinase-like_dom_sf"/>
</dbReference>
<dbReference type="InterPro" id="IPR000719">
    <property type="entry name" value="Prot_kinase_dom"/>
</dbReference>
<dbReference type="InterPro" id="IPR016960">
    <property type="entry name" value="YegI-like"/>
</dbReference>
<dbReference type="PIRSF" id="PIRSF030823">
    <property type="entry name" value="UCP030823_PK_HhH"/>
    <property type="match status" value="1"/>
</dbReference>
<dbReference type="SUPFAM" id="SSF56112">
    <property type="entry name" value="Protein kinase-like (PK-like)"/>
    <property type="match status" value="1"/>
</dbReference>
<dbReference type="PROSITE" id="PS50011">
    <property type="entry name" value="PROTEIN_KINASE_DOM"/>
    <property type="match status" value="1"/>
</dbReference>
<feature type="chain" id="PRO_0000169123" description="Protein kinase YegI">
    <location>
        <begin position="1"/>
        <end position="648"/>
    </location>
</feature>
<feature type="domain" description="Protein kinase" evidence="1">
    <location>
        <begin position="15"/>
        <end position="302"/>
    </location>
</feature>
<feature type="active site" description="Proton acceptor" evidence="1">
    <location>
        <position position="143"/>
    </location>
</feature>
<feature type="binding site" evidence="1">
    <location>
        <begin position="21"/>
        <end position="29"/>
    </location>
    <ligand>
        <name>ATP</name>
        <dbReference type="ChEBI" id="CHEBI:30616"/>
    </ligand>
</feature>
<feature type="binding site" evidence="1">
    <location>
        <position position="41"/>
    </location>
    <ligand>
        <name>ATP</name>
        <dbReference type="ChEBI" id="CHEBI:30616"/>
    </ligand>
</feature>
<accession>P76393</accession>
<accession>Q2MAX9</accession>
<protein>
    <recommendedName>
        <fullName evidence="3">Protein kinase YegI</fullName>
        <ecNumber evidence="1">2.7.-.-</ecNumber>
    </recommendedName>
</protein>
<keyword id="KW-0067">ATP-binding</keyword>
<keyword id="KW-0418">Kinase</keyword>
<keyword id="KW-0547">Nucleotide-binding</keyword>
<keyword id="KW-0597">Phosphoprotein</keyword>
<keyword id="KW-1185">Reference proteome</keyword>
<keyword id="KW-0808">Transferase</keyword>
<evidence type="ECO:0000255" key="1">
    <source>
        <dbReference type="PROSITE-ProRule" id="PRU00159"/>
    </source>
</evidence>
<evidence type="ECO:0000269" key="2">
    <source>
    </source>
</evidence>
<evidence type="ECO:0000305" key="3"/>
<sequence length="648" mass="71639">MKTNIKVFTSTGELTTLGRELGKGGEGAVYDIEEFVDSVAKIYHTPPPALKQDKLAFMAATADAQLLNYVAWPQATLHGGRGGKVIGFMMPKVSGKEPIHMIYSPAHRRQSYPHCAWDFLLYVARNIASSFATVHEHGHVVGDVNQNSFMVGRDSKVVLIDSDSFQINANGTLHLCEVGVSHFTPPELQTLPSFVGFERTENHDNFGLALLIFHVLFGGRHPYSGVPLISDAGNALETDITHFRYAYASDNQRRGLKPPPRSIPLSMLPSDVEAMFQQAFTESGVATGRPTAKAWVAALDSLRQQLKKCIVSAMHVYPAHLTDCPWCALDNQGVIYFIDLGEEVITTGGNFVLAKVWAMVMASVAPPALQLPLPDHFQPTGRPLPLGLLRREYIILLEIALSALSLLLCGLQAEPRYIILVPVLAAIWIIGSLTSKAYKAEVQQRREAFNRAKMDYDHLVRQIQQVGGLEGFIAKRTMLEKMKDEILGLPEEEKRALAALHDTARERQKQKFLEGFFIDVASIPGVGPARKAALRSFGIETAADVTRRGVKQVKGFGDHLTQAVIDWKASCERRFVFRPNEAITPADRQAVMAKMTAKRHRLESALTVGATELQRFRLHAPARTMPLMEPLRQAAEKLAQAQADLSRC</sequence>
<proteinExistence type="evidence at protein level"/>
<gene>
    <name type="primary">yegI</name>
    <name type="ordered locus">b2070</name>
    <name type="ordered locus">JW2055</name>
</gene>
<name>YEGI_ECOLI</name>